<dbReference type="EMBL" id="U60315">
    <property type="protein sequence ID" value="AAC55133.1"/>
    <property type="molecule type" value="Genomic_DNA"/>
</dbReference>
<dbReference type="EMBL" id="KY040275">
    <property type="protein sequence ID" value="AQY16743.1"/>
    <property type="molecule type" value="Genomic_DNA"/>
</dbReference>
<dbReference type="EMBL" id="KY040277">
    <property type="protein sequence ID" value="AQY17103.1"/>
    <property type="molecule type" value="Genomic_DNA"/>
</dbReference>
<dbReference type="PIR" id="T30607">
    <property type="entry name" value="T30607"/>
</dbReference>
<dbReference type="RefSeq" id="NP_043956.1">
    <property type="nucleotide sequence ID" value="NC_001731.1"/>
</dbReference>
<dbReference type="GeneID" id="1487026"/>
<dbReference type="KEGG" id="vg:1487026"/>
<dbReference type="Proteomes" id="UP000000869">
    <property type="component" value="Genome"/>
</dbReference>
<dbReference type="GO" id="GO:0030430">
    <property type="term" value="C:host cell cytoplasm"/>
    <property type="evidence" value="ECO:0007669"/>
    <property type="project" value="UniProtKB-SubCell"/>
</dbReference>
<dbReference type="GO" id="GO:0085034">
    <property type="term" value="P:symbiont-mediated suppression of host NF-kappaB cascade"/>
    <property type="evidence" value="ECO:0007669"/>
    <property type="project" value="UniProtKB-KW"/>
</dbReference>
<organism>
    <name type="scientific">Molluscum contagiosum virus subtype 1</name>
    <name type="common">MOCV</name>
    <name type="synonym">MCVI</name>
    <dbReference type="NCBI Taxonomy" id="10280"/>
    <lineage>
        <taxon>Viruses</taxon>
        <taxon>Varidnaviria</taxon>
        <taxon>Bamfordvirae</taxon>
        <taxon>Nucleocytoviricota</taxon>
        <taxon>Pokkesviricetes</taxon>
        <taxon>Chitovirales</taxon>
        <taxon>Poxviridae</taxon>
        <taxon>Chordopoxvirinae</taxon>
        <taxon>Molluscipoxvirus</taxon>
        <taxon>Molluscum contagiosum virus</taxon>
    </lineage>
</organism>
<proteinExistence type="evidence at protein level"/>
<keyword id="KW-1035">Host cytoplasm</keyword>
<keyword id="KW-0945">Host-virus interaction</keyword>
<keyword id="KW-1100">Inhibition of host NF-kappa-B by virus</keyword>
<keyword id="KW-1185">Reference proteome</keyword>
<comment type="function">
    <text evidence="1">Plays a role in the inhibition of the host NF-kappa-B pathway by preventing ubiquitin binding-dependent regulation of host IKBKB activation by IKBKG/NEMO.</text>
</comment>
<comment type="subunit">
    <text evidence="1">Interacts with host IKBKG; this interaction prevents NF-kappa-B activation.</text>
</comment>
<comment type="subcellular location">
    <subcellularLocation>
        <location evidence="1">Host cytoplasm</location>
    </subcellularLocation>
</comment>
<sequence length="85" mass="8900">MCLVAPMQCGCASCVRILDALLSAMEALVQMRLLSEEEKTSCASQFLELAIFAVENCRGGRQALLQARGEPASLGEVAGKGPAAD</sequence>
<evidence type="ECO:0000269" key="1">
    <source>
    </source>
</evidence>
<reference key="1">
    <citation type="journal article" date="1996" name="Science">
        <title>Genome sequence of a human tumorigenic poxvirus: prediction of specific host response-evasion genes.</title>
        <authorList>
            <person name="Senkevich T.G."/>
            <person name="Bugert J.J."/>
            <person name="Sisler J.R."/>
            <person name="Koonin E.V."/>
            <person name="Darai G."/>
            <person name="Moss B."/>
        </authorList>
    </citation>
    <scope>NUCLEOTIDE SEQUENCE [LARGE SCALE GENOMIC DNA]</scope>
</reference>
<reference key="2">
    <citation type="journal article" date="2017" name="J. Gen. Virol.">
        <title>Recombination events and variability among full-length genomes of co-circulating molluscum contagiosum virus subtypes 1 and 2.</title>
        <authorList>
            <person name="Lopez-Bueno A."/>
            <person name="Parras-Molto M."/>
            <person name="Lopez-Barrantes O."/>
            <person name="Belda S."/>
            <person name="Alejo A."/>
        </authorList>
    </citation>
    <scope>NUCLEOTIDE SEQUENCE [LARGE SCALE GENOMIC DNA]</scope>
</reference>
<reference key="3">
    <citation type="journal article" date="2017" name="J. Virol.">
        <title>Molluscum contagiosum virus protein MC005 inhibits NF-kappaB activation by targeting NEMO-regulated IkappaB kinase activation.</title>
        <authorList>
            <person name="Brady G."/>
            <person name="Haas D.A."/>
            <person name="Farrell P.J."/>
            <person name="Pichlmair A."/>
            <person name="Bowie A.G."/>
        </authorList>
    </citation>
    <scope>FUNCTION</scope>
    <scope>INTERACTION WITH HOST IKBKG</scope>
    <scope>SUBCELLULAR LOCATION</scope>
</reference>
<gene>
    <name type="primary">MC005L</name>
</gene>
<name>MC005_MCV1</name>
<organismHost>
    <name type="scientific">Homo sapiens</name>
    <name type="common">Human</name>
    <dbReference type="NCBI Taxonomy" id="9606"/>
</organismHost>
<accession>Q98176</accession>
<feature type="chain" id="PRO_0000442576" description="Protein MC005">
    <location>
        <begin position="1"/>
        <end position="85"/>
    </location>
</feature>
<protein>
    <recommendedName>
        <fullName>Protein MC005</fullName>
    </recommendedName>
</protein>